<dbReference type="EC" id="3.1.3.11" evidence="1"/>
<dbReference type="EMBL" id="CP001581">
    <property type="protein sequence ID" value="ACO85528.1"/>
    <property type="molecule type" value="Genomic_DNA"/>
</dbReference>
<dbReference type="RefSeq" id="WP_012704803.1">
    <property type="nucleotide sequence ID" value="NC_012563.1"/>
</dbReference>
<dbReference type="KEGG" id="cby:CLM_0607"/>
<dbReference type="eggNOG" id="COG3855">
    <property type="taxonomic scope" value="Bacteria"/>
</dbReference>
<dbReference type="HOGENOM" id="CLU_028392_2_0_9"/>
<dbReference type="UniPathway" id="UPA00138"/>
<dbReference type="Proteomes" id="UP000001374">
    <property type="component" value="Chromosome"/>
</dbReference>
<dbReference type="GO" id="GO:0042132">
    <property type="term" value="F:fructose 1,6-bisphosphate 1-phosphatase activity"/>
    <property type="evidence" value="ECO:0007669"/>
    <property type="project" value="UniProtKB-UniRule"/>
</dbReference>
<dbReference type="GO" id="GO:0006094">
    <property type="term" value="P:gluconeogenesis"/>
    <property type="evidence" value="ECO:0007669"/>
    <property type="project" value="UniProtKB-UniRule"/>
</dbReference>
<dbReference type="Gene3D" id="3.60.21.10">
    <property type="match status" value="1"/>
</dbReference>
<dbReference type="HAMAP" id="MF_01854">
    <property type="entry name" value="FBPase_class3"/>
    <property type="match status" value="1"/>
</dbReference>
<dbReference type="InterPro" id="IPR009164">
    <property type="entry name" value="FBPtase_class3"/>
</dbReference>
<dbReference type="InterPro" id="IPR029052">
    <property type="entry name" value="Metallo-depent_PP-like"/>
</dbReference>
<dbReference type="Pfam" id="PF06874">
    <property type="entry name" value="FBPase_2"/>
    <property type="match status" value="1"/>
</dbReference>
<dbReference type="PIRSF" id="PIRSF000906">
    <property type="entry name" value="FBPtase_Bacill"/>
    <property type="match status" value="1"/>
</dbReference>
<dbReference type="SUPFAM" id="SSF56300">
    <property type="entry name" value="Metallo-dependent phosphatases"/>
    <property type="match status" value="1"/>
</dbReference>
<protein>
    <recommendedName>
        <fullName evidence="1">Fructose-1,6-bisphosphatase class 3</fullName>
        <shortName evidence="1">FBPase class 3</shortName>
        <ecNumber evidence="1">3.1.3.11</ecNumber>
    </recommendedName>
    <alternativeName>
        <fullName evidence="1">D-fructose-1,6-bisphosphate 1-phosphohydrolase class 3</fullName>
    </alternativeName>
</protein>
<evidence type="ECO:0000255" key="1">
    <source>
        <dbReference type="HAMAP-Rule" id="MF_01854"/>
    </source>
</evidence>
<proteinExistence type="inferred from homology"/>
<comment type="catalytic activity">
    <reaction evidence="1">
        <text>beta-D-fructose 1,6-bisphosphate + H2O = beta-D-fructose 6-phosphate + phosphate</text>
        <dbReference type="Rhea" id="RHEA:11064"/>
        <dbReference type="ChEBI" id="CHEBI:15377"/>
        <dbReference type="ChEBI" id="CHEBI:32966"/>
        <dbReference type="ChEBI" id="CHEBI:43474"/>
        <dbReference type="ChEBI" id="CHEBI:57634"/>
        <dbReference type="EC" id="3.1.3.11"/>
    </reaction>
</comment>
<comment type="cofactor">
    <cofactor evidence="1">
        <name>Mn(2+)</name>
        <dbReference type="ChEBI" id="CHEBI:29035"/>
    </cofactor>
</comment>
<comment type="pathway">
    <text evidence="1">Carbohydrate biosynthesis; gluconeogenesis.</text>
</comment>
<comment type="similarity">
    <text evidence="1">Belongs to the FBPase class 3 family.</text>
</comment>
<name>F16PC_CLOBJ</name>
<reference key="1">
    <citation type="submission" date="2008-10" db="EMBL/GenBank/DDBJ databases">
        <title>Genome sequence of Clostridium botulinum A2 Kyoto.</title>
        <authorList>
            <person name="Shrivastava S."/>
            <person name="Brinkac L.M."/>
            <person name="Brown J.L."/>
            <person name="Bruce D."/>
            <person name="Detter C.C."/>
            <person name="Johnson E.A."/>
            <person name="Munk C.A."/>
            <person name="Smith L.A."/>
            <person name="Smith T.J."/>
            <person name="Sutton G."/>
            <person name="Brettin T.S."/>
        </authorList>
    </citation>
    <scope>NUCLEOTIDE SEQUENCE [LARGE SCALE GENOMIC DNA]</scope>
    <source>
        <strain>Kyoto / Type A2</strain>
    </source>
</reference>
<accession>C1FSJ4</accession>
<organism>
    <name type="scientific">Clostridium botulinum (strain Kyoto / Type A2)</name>
    <dbReference type="NCBI Taxonomy" id="536232"/>
    <lineage>
        <taxon>Bacteria</taxon>
        <taxon>Bacillati</taxon>
        <taxon>Bacillota</taxon>
        <taxon>Clostridia</taxon>
        <taxon>Eubacteriales</taxon>
        <taxon>Clostridiaceae</taxon>
        <taxon>Clostridium</taxon>
    </lineage>
</organism>
<feature type="chain" id="PRO_1000188681" description="Fructose-1,6-bisphosphatase class 3">
    <location>
        <begin position="1"/>
        <end position="668"/>
    </location>
</feature>
<keyword id="KW-0119">Carbohydrate metabolism</keyword>
<keyword id="KW-0378">Hydrolase</keyword>
<keyword id="KW-0464">Manganese</keyword>
<gene>
    <name evidence="1" type="primary">fbp</name>
    <name type="ordered locus">CLM_0607</name>
</gene>
<sequence length="668" mass="77387">MTLYDENNLHIIKDNLRYLKLLSKQYPSISSASSEIINLQAILNLPKGTEHFISDVHGEYESFTHMLKNASGVIKRKIDDVFGTSLRECDKKNLATLIYYPEQKLDLIKKSEKNLEDWYKITLYRLIRLCQIVSSKYTRSKVRKSLPSDFAYIIEELLNEQGDRVDKQEYYNSIIETIIDIDRASEFIIAISNVIQRLVVDKLHIIGDIYDRGPGAEIIIEALSKHHSIDIQWGNHDIVWMGAAAGCEACIANVIRISLRYANLSTLEDGYGINLLPLATFAMDFYKEDNCENFKPRTIDKNLNETDIKLLSKMHKAISIIQFKLEGKIIKRRPEFKMEERLLLDKINIKEGTLNLNEKIYKLIDTNFPTLDKENPYELNERERDLVEKLTNSFINSEKLQRHIKFLYSNGSLYLKYNSNLLYHGCIPLNEDGSLKEVTLCKETLKGKSLLDKLDRLAREAYFFKKDPESKLYGMDMMWYLWCGPNSPLFGKKKMTTFERYFLDDKNTHKEQKNPYYKYRNDEKMCTMIFEEFELDADNSHIINGHIPVKTKEGENPIKANGKLLVIDGGFCKAYQPQTGIAGYTLIYNSYGLLLTSHEPFSSIHKAIVEGNDILSSTTILEHVSSRKRVLDTDSGEEIKKQIHDLEMLLVAYRKGLIKEENEANIRF</sequence>